<keyword id="KW-0134">Cell wall</keyword>
<keyword id="KW-0961">Cell wall biogenesis/degradation</keyword>
<keyword id="KW-1015">Disulfide bond</keyword>
<keyword id="KW-0325">Glycoprotein</keyword>
<keyword id="KW-0472">Membrane</keyword>
<keyword id="KW-1185">Reference proteome</keyword>
<keyword id="KW-0964">Secreted</keyword>
<keyword id="KW-0732">Signal</keyword>
<accession>Q9SHD1</accession>
<accession>Q84WA9</accession>
<gene>
    <name type="primary">EXPB4</name>
    <name type="ordered locus">At2g45110</name>
    <name type="ORF">T14P1.32</name>
</gene>
<name>EXPB4_ARATH</name>
<feature type="signal peptide" evidence="2">
    <location>
        <begin position="1"/>
        <end position="23"/>
    </location>
</feature>
<feature type="chain" id="PRO_0000008710" description="Expansin-B4">
    <location>
        <begin position="24"/>
        <end position="259"/>
    </location>
</feature>
<feature type="domain" description="Expansin-like EG45" evidence="4">
    <location>
        <begin position="51"/>
        <end position="161"/>
    </location>
</feature>
<feature type="domain" description="Expansin-like CBD" evidence="3">
    <location>
        <begin position="174"/>
        <end position="255"/>
    </location>
</feature>
<feature type="glycosylation site" description="N-linked (GlcNAc...) asparagine" evidence="2">
    <location>
        <position position="25"/>
    </location>
</feature>
<feature type="disulfide bond" evidence="4">
    <location>
        <begin position="54"/>
        <end position="83"/>
    </location>
</feature>
<feature type="disulfide bond" evidence="4">
    <location>
        <begin position="86"/>
        <end position="156"/>
    </location>
</feature>
<feature type="disulfide bond" evidence="4">
    <location>
        <begin position="91"/>
        <end position="97"/>
    </location>
</feature>
<feature type="sequence conflict" description="In Ref. 3; AAO42087." evidence="5" ref="3">
    <original>L</original>
    <variation>P</variation>
    <location>
        <position position="13"/>
    </location>
</feature>
<sequence>MASSQRYFALLALFAVSLKFCYCQNETIDVAGSGTAGVTWYGEPFGAGSTGGACGYGSAVANPPLYAMVSAGGPSLFNNGKGCGTCYQVVCIGHPACSGSPITVTITDECPGGPCASEPVHIDLSGKAMGALAKPGQADQLRSAGVIRVNYKRAACLYRGTNIVFRMDAGANPYYISFVVEYENGDGDLSNVEIQPAGGSFISMQEMRSAVWKVNSGSALRGPFNIRLTSGESHKVIVAYNVIPANWKPDESYRSIVNF</sequence>
<reference key="1">
    <citation type="journal article" date="1999" name="Nature">
        <title>Sequence and analysis of chromosome 2 of the plant Arabidopsis thaliana.</title>
        <authorList>
            <person name="Lin X."/>
            <person name="Kaul S."/>
            <person name="Rounsley S.D."/>
            <person name="Shea T.P."/>
            <person name="Benito M.-I."/>
            <person name="Town C.D."/>
            <person name="Fujii C.Y."/>
            <person name="Mason T.M."/>
            <person name="Bowman C.L."/>
            <person name="Barnstead M.E."/>
            <person name="Feldblyum T.V."/>
            <person name="Buell C.R."/>
            <person name="Ketchum K.A."/>
            <person name="Lee J.J."/>
            <person name="Ronning C.M."/>
            <person name="Koo H.L."/>
            <person name="Moffat K.S."/>
            <person name="Cronin L.A."/>
            <person name="Shen M."/>
            <person name="Pai G."/>
            <person name="Van Aken S."/>
            <person name="Umayam L."/>
            <person name="Tallon L.J."/>
            <person name="Gill J.E."/>
            <person name="Adams M.D."/>
            <person name="Carrera A.J."/>
            <person name="Creasy T.H."/>
            <person name="Goodman H.M."/>
            <person name="Somerville C.R."/>
            <person name="Copenhaver G.P."/>
            <person name="Preuss D."/>
            <person name="Nierman W.C."/>
            <person name="White O."/>
            <person name="Eisen J.A."/>
            <person name="Salzberg S.L."/>
            <person name="Fraser C.M."/>
            <person name="Venter J.C."/>
        </authorList>
    </citation>
    <scope>NUCLEOTIDE SEQUENCE [LARGE SCALE GENOMIC DNA]</scope>
    <source>
        <strain>cv. Columbia</strain>
    </source>
</reference>
<reference key="2">
    <citation type="journal article" date="2017" name="Plant J.">
        <title>Araport11: a complete reannotation of the Arabidopsis thaliana reference genome.</title>
        <authorList>
            <person name="Cheng C.Y."/>
            <person name="Krishnakumar V."/>
            <person name="Chan A.P."/>
            <person name="Thibaud-Nissen F."/>
            <person name="Schobel S."/>
            <person name="Town C.D."/>
        </authorList>
    </citation>
    <scope>GENOME REANNOTATION</scope>
    <source>
        <strain>cv. Columbia</strain>
    </source>
</reference>
<reference key="3">
    <citation type="journal article" date="2003" name="Science">
        <title>Empirical analysis of transcriptional activity in the Arabidopsis genome.</title>
        <authorList>
            <person name="Yamada K."/>
            <person name="Lim J."/>
            <person name="Dale J.M."/>
            <person name="Chen H."/>
            <person name="Shinn P."/>
            <person name="Palm C.J."/>
            <person name="Southwick A.M."/>
            <person name="Wu H.C."/>
            <person name="Kim C.J."/>
            <person name="Nguyen M."/>
            <person name="Pham P.K."/>
            <person name="Cheuk R.F."/>
            <person name="Karlin-Newmann G."/>
            <person name="Liu S.X."/>
            <person name="Lam B."/>
            <person name="Sakano H."/>
            <person name="Wu T."/>
            <person name="Yu G."/>
            <person name="Miranda M."/>
            <person name="Quach H.L."/>
            <person name="Tripp M."/>
            <person name="Chang C.H."/>
            <person name="Lee J.M."/>
            <person name="Toriumi M.J."/>
            <person name="Chan M.M."/>
            <person name="Tang C.C."/>
            <person name="Onodera C.S."/>
            <person name="Deng J.M."/>
            <person name="Akiyama K."/>
            <person name="Ansari Y."/>
            <person name="Arakawa T."/>
            <person name="Banh J."/>
            <person name="Banno F."/>
            <person name="Bowser L."/>
            <person name="Brooks S.Y."/>
            <person name="Carninci P."/>
            <person name="Chao Q."/>
            <person name="Choy N."/>
            <person name="Enju A."/>
            <person name="Goldsmith A.D."/>
            <person name="Gurjal M."/>
            <person name="Hansen N.F."/>
            <person name="Hayashizaki Y."/>
            <person name="Johnson-Hopson C."/>
            <person name="Hsuan V.W."/>
            <person name="Iida K."/>
            <person name="Karnes M."/>
            <person name="Khan S."/>
            <person name="Koesema E."/>
            <person name="Ishida J."/>
            <person name="Jiang P.X."/>
            <person name="Jones T."/>
            <person name="Kawai J."/>
            <person name="Kamiya A."/>
            <person name="Meyers C."/>
            <person name="Nakajima M."/>
            <person name="Narusaka M."/>
            <person name="Seki M."/>
            <person name="Sakurai T."/>
            <person name="Satou M."/>
            <person name="Tamse R."/>
            <person name="Vaysberg M."/>
            <person name="Wallender E.K."/>
            <person name="Wong C."/>
            <person name="Yamamura Y."/>
            <person name="Yuan S."/>
            <person name="Shinozaki K."/>
            <person name="Davis R.W."/>
            <person name="Theologis A."/>
            <person name="Ecker J.R."/>
        </authorList>
    </citation>
    <scope>NUCLEOTIDE SEQUENCE [LARGE SCALE MRNA]</scope>
    <source>
        <strain>cv. Columbia</strain>
    </source>
</reference>
<reference key="4">
    <citation type="journal article" date="2004" name="Plant Mol. Biol.">
        <title>Nomenclature for members of the expansin superfamily of genes and proteins.</title>
        <authorList>
            <person name="Kende H."/>
            <person name="Bradford K.J."/>
            <person name="Brummell D.A."/>
            <person name="Cho H.-T."/>
            <person name="Cosgrove D.J."/>
            <person name="Fleming A.J."/>
            <person name="Gehring C."/>
            <person name="Lee Y."/>
            <person name="McQueen-Mason S.J."/>
            <person name="Rose J.K.C."/>
            <person name="Voesenek L.A.C."/>
        </authorList>
    </citation>
    <scope>NOMENCLATURE</scope>
</reference>
<proteinExistence type="evidence at transcript level"/>
<comment type="function">
    <text evidence="1">May cause loosening and extension of plant cell walls by disrupting non-covalent bonding between cellulose microfibrils and matrix glucans. No enzymatic activity has been found (By similarity).</text>
</comment>
<comment type="subcellular location">
    <subcellularLocation>
        <location>Secreted</location>
        <location>Cell wall</location>
    </subcellularLocation>
    <subcellularLocation>
        <location>Membrane</location>
        <topology>Peripheral membrane protein</topology>
    </subcellularLocation>
</comment>
<comment type="similarity">
    <text evidence="5">Belongs to the expansin family. Expansin B subfamily.</text>
</comment>
<comment type="online information" name="EXPANSIN homepage">
    <link uri="https://www.dept.psu.edu/biology/groups/expansins/index.htm"/>
</comment>
<protein>
    <recommendedName>
        <fullName>Expansin-B4</fullName>
        <shortName>At-EXPB4</shortName>
        <shortName>AtEXPB4</shortName>
    </recommendedName>
    <alternativeName>
        <fullName>Ath-ExpBeta-1.1</fullName>
    </alternativeName>
    <alternativeName>
        <fullName>Beta-expansin-4</fullName>
    </alternativeName>
</protein>
<dbReference type="EMBL" id="CP002685">
    <property type="protein sequence ID" value="AEC10508.1"/>
    <property type="molecule type" value="Genomic_DNA"/>
</dbReference>
<dbReference type="EMBL" id="BT004056">
    <property type="protein sequence ID" value="AAO42087.1"/>
    <property type="molecule type" value="mRNA"/>
</dbReference>
<dbReference type="PIR" id="E84886">
    <property type="entry name" value="E84886"/>
</dbReference>
<dbReference type="RefSeq" id="NP_182036.1">
    <property type="nucleotide sequence ID" value="NM_130074.3"/>
</dbReference>
<dbReference type="SMR" id="Q9SHD1"/>
<dbReference type="STRING" id="3702.Q9SHD1"/>
<dbReference type="GlyCosmos" id="Q9SHD1">
    <property type="glycosylation" value="1 site, No reported glycans"/>
</dbReference>
<dbReference type="GlyGen" id="Q9SHD1">
    <property type="glycosylation" value="1 site"/>
</dbReference>
<dbReference type="PaxDb" id="3702-AT2G45110.1"/>
<dbReference type="ProteomicsDB" id="222246"/>
<dbReference type="EnsemblPlants" id="AT2G45110.1">
    <property type="protein sequence ID" value="AT2G45110.1"/>
    <property type="gene ID" value="AT2G45110"/>
</dbReference>
<dbReference type="GeneID" id="819118"/>
<dbReference type="Gramene" id="AT2G45110.1">
    <property type="protein sequence ID" value="AT2G45110.1"/>
    <property type="gene ID" value="AT2G45110"/>
</dbReference>
<dbReference type="KEGG" id="ath:AT2G45110"/>
<dbReference type="Araport" id="AT2G45110"/>
<dbReference type="TAIR" id="AT2G45110">
    <property type="gene designation" value="EXPB4"/>
</dbReference>
<dbReference type="eggNOG" id="ENOG502QRTE">
    <property type="taxonomic scope" value="Eukaryota"/>
</dbReference>
<dbReference type="HOGENOM" id="CLU_027462_1_2_1"/>
<dbReference type="InParanoid" id="Q9SHD1"/>
<dbReference type="OMA" id="CIGHPAC"/>
<dbReference type="PhylomeDB" id="Q9SHD1"/>
<dbReference type="PRO" id="PR:Q9SHD1"/>
<dbReference type="Proteomes" id="UP000006548">
    <property type="component" value="Chromosome 2"/>
</dbReference>
<dbReference type="ExpressionAtlas" id="Q9SHD1">
    <property type="expression patterns" value="baseline"/>
</dbReference>
<dbReference type="GO" id="GO:0005576">
    <property type="term" value="C:extracellular region"/>
    <property type="evidence" value="ECO:0007669"/>
    <property type="project" value="UniProtKB-KW"/>
</dbReference>
<dbReference type="GO" id="GO:0016020">
    <property type="term" value="C:membrane"/>
    <property type="evidence" value="ECO:0007669"/>
    <property type="project" value="UniProtKB-SubCell"/>
</dbReference>
<dbReference type="GO" id="GO:0009653">
    <property type="term" value="P:anatomical structure morphogenesis"/>
    <property type="evidence" value="ECO:0007669"/>
    <property type="project" value="UniProtKB-ARBA"/>
</dbReference>
<dbReference type="GO" id="GO:0009828">
    <property type="term" value="P:plant-type cell wall loosening"/>
    <property type="evidence" value="ECO:0000250"/>
    <property type="project" value="UniProtKB"/>
</dbReference>
<dbReference type="GO" id="GO:0019953">
    <property type="term" value="P:sexual reproduction"/>
    <property type="evidence" value="ECO:0007669"/>
    <property type="project" value="InterPro"/>
</dbReference>
<dbReference type="CDD" id="cd22275">
    <property type="entry name" value="DPBB_EXPB_N"/>
    <property type="match status" value="1"/>
</dbReference>
<dbReference type="Gene3D" id="2.60.40.760">
    <property type="entry name" value="Expansin, cellulose-binding-like domain"/>
    <property type="match status" value="1"/>
</dbReference>
<dbReference type="Gene3D" id="2.40.40.10">
    <property type="entry name" value="RlpA-like domain"/>
    <property type="match status" value="1"/>
</dbReference>
<dbReference type="InterPro" id="IPR007118">
    <property type="entry name" value="Expan_Lol_pI"/>
</dbReference>
<dbReference type="InterPro" id="IPR007112">
    <property type="entry name" value="Expansin/allergen_DPBB_dom"/>
</dbReference>
<dbReference type="InterPro" id="IPR007117">
    <property type="entry name" value="Expansin_CBD"/>
</dbReference>
<dbReference type="InterPro" id="IPR036749">
    <property type="entry name" value="Expansin_CBD_sf"/>
</dbReference>
<dbReference type="InterPro" id="IPR005795">
    <property type="entry name" value="LolPI"/>
</dbReference>
<dbReference type="InterPro" id="IPR009009">
    <property type="entry name" value="RlpA-like_DPBB"/>
</dbReference>
<dbReference type="InterPro" id="IPR036908">
    <property type="entry name" value="RlpA-like_sf"/>
</dbReference>
<dbReference type="PANTHER" id="PTHR31692">
    <property type="entry name" value="EXPANSIN-B3"/>
    <property type="match status" value="1"/>
</dbReference>
<dbReference type="PANTHER" id="PTHR31692:SF106">
    <property type="entry name" value="EXPANSIN-B4-RELATED"/>
    <property type="match status" value="1"/>
</dbReference>
<dbReference type="Pfam" id="PF03330">
    <property type="entry name" value="DPBB_1"/>
    <property type="match status" value="1"/>
</dbReference>
<dbReference type="Pfam" id="PF01357">
    <property type="entry name" value="Expansin_C"/>
    <property type="match status" value="1"/>
</dbReference>
<dbReference type="PRINTS" id="PR01225">
    <property type="entry name" value="EXPANSNFAMLY"/>
</dbReference>
<dbReference type="PRINTS" id="PR00829">
    <property type="entry name" value="LOLP1ALLERGN"/>
</dbReference>
<dbReference type="SMART" id="SM00837">
    <property type="entry name" value="DPBB_1"/>
    <property type="match status" value="1"/>
</dbReference>
<dbReference type="SUPFAM" id="SSF50685">
    <property type="entry name" value="Barwin-like endoglucanases"/>
    <property type="match status" value="1"/>
</dbReference>
<dbReference type="SUPFAM" id="SSF49590">
    <property type="entry name" value="PHL pollen allergen"/>
    <property type="match status" value="1"/>
</dbReference>
<dbReference type="PROSITE" id="PS50843">
    <property type="entry name" value="EXPANSIN_CBD"/>
    <property type="match status" value="1"/>
</dbReference>
<dbReference type="PROSITE" id="PS50842">
    <property type="entry name" value="EXPANSIN_EG45"/>
    <property type="match status" value="1"/>
</dbReference>
<organism>
    <name type="scientific">Arabidopsis thaliana</name>
    <name type="common">Mouse-ear cress</name>
    <dbReference type="NCBI Taxonomy" id="3702"/>
    <lineage>
        <taxon>Eukaryota</taxon>
        <taxon>Viridiplantae</taxon>
        <taxon>Streptophyta</taxon>
        <taxon>Embryophyta</taxon>
        <taxon>Tracheophyta</taxon>
        <taxon>Spermatophyta</taxon>
        <taxon>Magnoliopsida</taxon>
        <taxon>eudicotyledons</taxon>
        <taxon>Gunneridae</taxon>
        <taxon>Pentapetalae</taxon>
        <taxon>rosids</taxon>
        <taxon>malvids</taxon>
        <taxon>Brassicales</taxon>
        <taxon>Brassicaceae</taxon>
        <taxon>Camelineae</taxon>
        <taxon>Arabidopsis</taxon>
    </lineage>
</organism>
<evidence type="ECO:0000250" key="1"/>
<evidence type="ECO:0000255" key="2"/>
<evidence type="ECO:0000255" key="3">
    <source>
        <dbReference type="PROSITE-ProRule" id="PRU00078"/>
    </source>
</evidence>
<evidence type="ECO:0000255" key="4">
    <source>
        <dbReference type="PROSITE-ProRule" id="PRU00079"/>
    </source>
</evidence>
<evidence type="ECO:0000305" key="5"/>